<sequence>MSKYEFIKIEKKWQEFWDNNKTYKVEEDPSIPKEKRLYILDMFPYPSANGLHVGHPEGYTATDIFGRYKLLNGFHVLHPIGFDSFGLPAENYAIQTGTHPQKSTEENINKFKKQIKALGFAYDWDREIRTHEENYYKWTQWIFLQLYKKGLAYVKEMPVWYCPELGTVLANEEIIQTSDGPKSERGSYSVEKKYLRQWVLKITKYAERLLDDLEELEWPESVKEMQRNWIGKSTGVEIEFEIEGHSDKIKVFTTRPDTIFGITYLVIAPENKLIEKITKNNFKQNVLKYVKHEELKSDLNRTSLEKDKSGVFTGSYAFHPITNEKIPIWVGSYVLGTYGTGAVMGVPAHDERDFQFAKKYQLKILPVISKSGKNEILEKAFVDDGISINSPNEFNNLKNSEVKDKVIKWLTKNKKGKEKVAYKLRDWIFSRQRYWGEPIPILFDKLGNAIPLEENDLPLKLPEIANYKPSGTGESPLSRIKDWVNVKDMGFTRETNTMPQWAGSCWYYLRYLDPKNSKEFANKKKIEYWMPVDLYIGGAEHTVLHLLYSRFWHKVLYDLGYVNTKEPFKKLINQGIITSFSYQKENGVLIPNDQVIEKDNKFFDKKDNKEVTQVIAKMSKSLKNVINPDDIIKEFGADSMRIYEMFMGPLTDSKPWNTKGIIGVFRFLNKIWNLREKELSKENPPREIISELHKVIKKVTEDTEKLNFNTAISAMMIFINELLKYEKNYLNIFKPFIIILSPYAPHLAEELWEYIGELPSLFKNSKWPKFDESLIIKDKKEIVLQINGKIKDKILLNKETGEKELKEIAMENSKIKSNLLNKKIVKIIVIKNKLVNIVIK</sequence>
<keyword id="KW-0030">Aminoacyl-tRNA synthetase</keyword>
<keyword id="KW-0067">ATP-binding</keyword>
<keyword id="KW-0963">Cytoplasm</keyword>
<keyword id="KW-0436">Ligase</keyword>
<keyword id="KW-0547">Nucleotide-binding</keyword>
<keyword id="KW-0648">Protein biosynthesis</keyword>
<protein>
    <recommendedName>
        <fullName evidence="1">Leucine--tRNA ligase</fullName>
        <ecNumber evidence="1">6.1.1.4</ecNumber>
    </recommendedName>
    <alternativeName>
        <fullName evidence="1">Leucyl-tRNA synthetase</fullName>
        <shortName evidence="1">LeuRS</shortName>
    </alternativeName>
</protein>
<evidence type="ECO:0000255" key="1">
    <source>
        <dbReference type="HAMAP-Rule" id="MF_00049"/>
    </source>
</evidence>
<accession>B7J1H9</accession>
<comment type="catalytic activity">
    <reaction evidence="1">
        <text>tRNA(Leu) + L-leucine + ATP = L-leucyl-tRNA(Leu) + AMP + diphosphate</text>
        <dbReference type="Rhea" id="RHEA:11688"/>
        <dbReference type="Rhea" id="RHEA-COMP:9613"/>
        <dbReference type="Rhea" id="RHEA-COMP:9622"/>
        <dbReference type="ChEBI" id="CHEBI:30616"/>
        <dbReference type="ChEBI" id="CHEBI:33019"/>
        <dbReference type="ChEBI" id="CHEBI:57427"/>
        <dbReference type="ChEBI" id="CHEBI:78442"/>
        <dbReference type="ChEBI" id="CHEBI:78494"/>
        <dbReference type="ChEBI" id="CHEBI:456215"/>
        <dbReference type="EC" id="6.1.1.4"/>
    </reaction>
</comment>
<comment type="subcellular location">
    <subcellularLocation>
        <location evidence="1">Cytoplasm</location>
    </subcellularLocation>
</comment>
<comment type="similarity">
    <text evidence="1">Belongs to the class-I aminoacyl-tRNA synthetase family.</text>
</comment>
<organism>
    <name type="scientific">Borreliella burgdorferi (strain ZS7)</name>
    <name type="common">Borrelia burgdorferi</name>
    <dbReference type="NCBI Taxonomy" id="445985"/>
    <lineage>
        <taxon>Bacteria</taxon>
        <taxon>Pseudomonadati</taxon>
        <taxon>Spirochaetota</taxon>
        <taxon>Spirochaetia</taxon>
        <taxon>Spirochaetales</taxon>
        <taxon>Borreliaceae</taxon>
        <taxon>Borreliella</taxon>
    </lineage>
</organism>
<reference key="1">
    <citation type="journal article" date="2011" name="J. Bacteriol.">
        <title>Whole-genome sequences of thirteen isolates of Borrelia burgdorferi.</title>
        <authorList>
            <person name="Schutzer S.E."/>
            <person name="Fraser-Liggett C.M."/>
            <person name="Casjens S.R."/>
            <person name="Qiu W.G."/>
            <person name="Dunn J.J."/>
            <person name="Mongodin E.F."/>
            <person name="Luft B.J."/>
        </authorList>
    </citation>
    <scope>NUCLEOTIDE SEQUENCE [LARGE SCALE GENOMIC DNA]</scope>
    <source>
        <strain>ZS7</strain>
    </source>
</reference>
<gene>
    <name evidence="1" type="primary">leuS</name>
    <name type="ordered locus">BbuZS7_0257</name>
</gene>
<name>SYL_BORBZ</name>
<proteinExistence type="inferred from homology"/>
<feature type="chain" id="PRO_1000199181" description="Leucine--tRNA ligase">
    <location>
        <begin position="1"/>
        <end position="840"/>
    </location>
</feature>
<feature type="short sequence motif" description="'HIGH' region">
    <location>
        <begin position="44"/>
        <end position="55"/>
    </location>
</feature>
<feature type="short sequence motif" description="'KMSKS' region">
    <location>
        <begin position="617"/>
        <end position="621"/>
    </location>
</feature>
<feature type="binding site" evidence="1">
    <location>
        <position position="620"/>
    </location>
    <ligand>
        <name>ATP</name>
        <dbReference type="ChEBI" id="CHEBI:30616"/>
    </ligand>
</feature>
<dbReference type="EC" id="6.1.1.4" evidence="1"/>
<dbReference type="EMBL" id="CP001205">
    <property type="protein sequence ID" value="ACK75155.1"/>
    <property type="molecule type" value="Genomic_DNA"/>
</dbReference>
<dbReference type="RefSeq" id="WP_012597411.1">
    <property type="nucleotide sequence ID" value="NC_011728.1"/>
</dbReference>
<dbReference type="SMR" id="B7J1H9"/>
<dbReference type="KEGG" id="bbz:BbuZS7_0257"/>
<dbReference type="HOGENOM" id="CLU_004427_0_0_12"/>
<dbReference type="Proteomes" id="UP000006901">
    <property type="component" value="Chromosome"/>
</dbReference>
<dbReference type="GO" id="GO:0005829">
    <property type="term" value="C:cytosol"/>
    <property type="evidence" value="ECO:0007669"/>
    <property type="project" value="TreeGrafter"/>
</dbReference>
<dbReference type="GO" id="GO:0002161">
    <property type="term" value="F:aminoacyl-tRNA deacylase activity"/>
    <property type="evidence" value="ECO:0007669"/>
    <property type="project" value="InterPro"/>
</dbReference>
<dbReference type="GO" id="GO:0005524">
    <property type="term" value="F:ATP binding"/>
    <property type="evidence" value="ECO:0007669"/>
    <property type="project" value="UniProtKB-UniRule"/>
</dbReference>
<dbReference type="GO" id="GO:0004823">
    <property type="term" value="F:leucine-tRNA ligase activity"/>
    <property type="evidence" value="ECO:0007669"/>
    <property type="project" value="UniProtKB-UniRule"/>
</dbReference>
<dbReference type="GO" id="GO:0006429">
    <property type="term" value="P:leucyl-tRNA aminoacylation"/>
    <property type="evidence" value="ECO:0007669"/>
    <property type="project" value="UniProtKB-UniRule"/>
</dbReference>
<dbReference type="CDD" id="cd07958">
    <property type="entry name" value="Anticodon_Ia_Leu_BEm"/>
    <property type="match status" value="1"/>
</dbReference>
<dbReference type="CDD" id="cd00812">
    <property type="entry name" value="LeuRS_core"/>
    <property type="match status" value="1"/>
</dbReference>
<dbReference type="FunFam" id="3.40.50.620:FF:000056">
    <property type="entry name" value="Leucine--tRNA ligase"/>
    <property type="match status" value="1"/>
</dbReference>
<dbReference type="FunFam" id="3.40.50.620:FF:000077">
    <property type="entry name" value="Leucine--tRNA ligase"/>
    <property type="match status" value="1"/>
</dbReference>
<dbReference type="FunFam" id="1.10.730.10:FF:000011">
    <property type="entry name" value="Leucine--tRNA ligase chloroplastic/mitochondrial"/>
    <property type="match status" value="1"/>
</dbReference>
<dbReference type="Gene3D" id="3.40.50.620">
    <property type="entry name" value="HUPs"/>
    <property type="match status" value="2"/>
</dbReference>
<dbReference type="Gene3D" id="1.10.730.10">
    <property type="entry name" value="Isoleucyl-tRNA Synthetase, Domain 1"/>
    <property type="match status" value="1"/>
</dbReference>
<dbReference type="HAMAP" id="MF_00049_B">
    <property type="entry name" value="Leu_tRNA_synth_B"/>
    <property type="match status" value="1"/>
</dbReference>
<dbReference type="InterPro" id="IPR001412">
    <property type="entry name" value="aa-tRNA-synth_I_CS"/>
</dbReference>
<dbReference type="InterPro" id="IPR002300">
    <property type="entry name" value="aa-tRNA-synth_Ia"/>
</dbReference>
<dbReference type="InterPro" id="IPR002302">
    <property type="entry name" value="Leu-tRNA-ligase"/>
</dbReference>
<dbReference type="InterPro" id="IPR025709">
    <property type="entry name" value="Leu_tRNA-synth_edit"/>
</dbReference>
<dbReference type="InterPro" id="IPR013155">
    <property type="entry name" value="M/V/L/I-tRNA-synth_anticd-bd"/>
</dbReference>
<dbReference type="InterPro" id="IPR015413">
    <property type="entry name" value="Methionyl/Leucyl_tRNA_Synth"/>
</dbReference>
<dbReference type="InterPro" id="IPR014729">
    <property type="entry name" value="Rossmann-like_a/b/a_fold"/>
</dbReference>
<dbReference type="InterPro" id="IPR009080">
    <property type="entry name" value="tRNAsynth_Ia_anticodon-bd"/>
</dbReference>
<dbReference type="InterPro" id="IPR009008">
    <property type="entry name" value="Val/Leu/Ile-tRNA-synth_edit"/>
</dbReference>
<dbReference type="NCBIfam" id="TIGR00396">
    <property type="entry name" value="leuS_bact"/>
    <property type="match status" value="1"/>
</dbReference>
<dbReference type="PANTHER" id="PTHR43740:SF2">
    <property type="entry name" value="LEUCINE--TRNA LIGASE, MITOCHONDRIAL"/>
    <property type="match status" value="1"/>
</dbReference>
<dbReference type="PANTHER" id="PTHR43740">
    <property type="entry name" value="LEUCYL-TRNA SYNTHETASE"/>
    <property type="match status" value="1"/>
</dbReference>
<dbReference type="Pfam" id="PF08264">
    <property type="entry name" value="Anticodon_1"/>
    <property type="match status" value="1"/>
</dbReference>
<dbReference type="Pfam" id="PF00133">
    <property type="entry name" value="tRNA-synt_1"/>
    <property type="match status" value="1"/>
</dbReference>
<dbReference type="Pfam" id="PF13603">
    <property type="entry name" value="tRNA-synt_1_2"/>
    <property type="match status" value="1"/>
</dbReference>
<dbReference type="Pfam" id="PF09334">
    <property type="entry name" value="tRNA-synt_1g"/>
    <property type="match status" value="1"/>
</dbReference>
<dbReference type="PRINTS" id="PR00985">
    <property type="entry name" value="TRNASYNTHLEU"/>
</dbReference>
<dbReference type="SUPFAM" id="SSF47323">
    <property type="entry name" value="Anticodon-binding domain of a subclass of class I aminoacyl-tRNA synthetases"/>
    <property type="match status" value="1"/>
</dbReference>
<dbReference type="SUPFAM" id="SSF52374">
    <property type="entry name" value="Nucleotidylyl transferase"/>
    <property type="match status" value="1"/>
</dbReference>
<dbReference type="SUPFAM" id="SSF50677">
    <property type="entry name" value="ValRS/IleRS/LeuRS editing domain"/>
    <property type="match status" value="1"/>
</dbReference>
<dbReference type="PROSITE" id="PS00178">
    <property type="entry name" value="AA_TRNA_LIGASE_I"/>
    <property type="match status" value="1"/>
</dbReference>